<gene>
    <name evidence="4" type="primary">hegD</name>
    <name evidence="4" type="ORF">T5.061</name>
    <name evidence="5" type="ORF">T5p059</name>
</gene>
<comment type="function">
    <text evidence="1">Endonuclease that cleaves only one strand of asymmetric DNA substrates thereby introducing interruptions into the template or coding strand.</text>
</comment>
<comment type="induction">
    <text evidence="3">Expressed in the early phase of the viral replicative cycle.</text>
</comment>
<evidence type="ECO:0000269" key="1">
    <source>
    </source>
</evidence>
<evidence type="ECO:0000305" key="2">
    <source>
    </source>
</evidence>
<evidence type="ECO:0000305" key="3">
    <source>
    </source>
</evidence>
<evidence type="ECO:0000312" key="4">
    <source>
        <dbReference type="EMBL" id="AAS77107.1"/>
    </source>
</evidence>
<evidence type="ECO:0000312" key="5">
    <source>
        <dbReference type="EMBL" id="AAU05212.1"/>
    </source>
</evidence>
<dbReference type="EC" id="3.1.21.-" evidence="2"/>
<dbReference type="EMBL" id="AY543070">
    <property type="protein sequence ID" value="AAS77107.1"/>
    <property type="molecule type" value="Genomic_DNA"/>
</dbReference>
<dbReference type="EMBL" id="AY692264">
    <property type="protein sequence ID" value="AAU05212.1"/>
    <property type="molecule type" value="Genomic_DNA"/>
</dbReference>
<dbReference type="EMBL" id="AY587007">
    <property type="protein sequence ID" value="AAX11995.1"/>
    <property type="molecule type" value="Genomic_DNA"/>
</dbReference>
<dbReference type="RefSeq" id="YP_006889.1">
    <property type="nucleotide sequence ID" value="NC_005859.1"/>
</dbReference>
<dbReference type="SMR" id="Q6QGM6"/>
<dbReference type="REBASE" id="11251">
    <property type="entry name" value="F-EcoT5II"/>
</dbReference>
<dbReference type="GeneID" id="2777668"/>
<dbReference type="KEGG" id="vg:2777668"/>
<dbReference type="Proteomes" id="UP000002107">
    <property type="component" value="Genome"/>
</dbReference>
<dbReference type="Proteomes" id="UP000002141">
    <property type="component" value="Segment"/>
</dbReference>
<dbReference type="Proteomes" id="UP000002503">
    <property type="component" value="Segment"/>
</dbReference>
<dbReference type="GO" id="GO:0003677">
    <property type="term" value="F:DNA binding"/>
    <property type="evidence" value="ECO:0007669"/>
    <property type="project" value="UniProtKB-KW"/>
</dbReference>
<dbReference type="GO" id="GO:0004519">
    <property type="term" value="F:endonuclease activity"/>
    <property type="evidence" value="ECO:0000314"/>
    <property type="project" value="UniProtKB"/>
</dbReference>
<dbReference type="CDD" id="cd00085">
    <property type="entry name" value="HNHc"/>
    <property type="match status" value="1"/>
</dbReference>
<dbReference type="FunFam" id="3.90.75.20:FF:000001">
    <property type="entry name" value="H-N-H endonuclease F-TflII"/>
    <property type="match status" value="1"/>
</dbReference>
<dbReference type="Gene3D" id="3.90.75.20">
    <property type="match status" value="1"/>
</dbReference>
<dbReference type="InterPro" id="IPR044925">
    <property type="entry name" value="His-Me_finger_sf"/>
</dbReference>
<dbReference type="InterPro" id="IPR003615">
    <property type="entry name" value="HNH_nuc"/>
</dbReference>
<dbReference type="InterPro" id="IPR010902">
    <property type="entry name" value="NUMOD4"/>
</dbReference>
<dbReference type="Pfam" id="PF13392">
    <property type="entry name" value="HNH_3"/>
    <property type="match status" value="1"/>
</dbReference>
<dbReference type="Pfam" id="PF07463">
    <property type="entry name" value="NUMOD4"/>
    <property type="match status" value="1"/>
</dbReference>
<dbReference type="SMART" id="SM00507">
    <property type="entry name" value="HNHc"/>
    <property type="match status" value="1"/>
</dbReference>
<dbReference type="SUPFAM" id="SSF54060">
    <property type="entry name" value="His-Me finger endonucleases"/>
    <property type="match status" value="1"/>
</dbReference>
<protein>
    <recommendedName>
        <fullName evidence="4">H-N-H endonuclease F-TflII</fullName>
        <ecNumber evidence="2">3.1.21.-</ecNumber>
    </recommendedName>
    <alternativeName>
        <fullName>HNH endodeoxyribonuclease F-TflII</fullName>
    </alternativeName>
    <alternativeName>
        <fullName evidence="5">HNH endonuclease F-TflII</fullName>
    </alternativeName>
</protein>
<organism>
    <name type="scientific">Escherichia phage T5</name>
    <name type="common">Enterobacteria phage T5</name>
    <dbReference type="NCBI Taxonomy" id="2695836"/>
    <lineage>
        <taxon>Viruses</taxon>
        <taxon>Duplodnaviria</taxon>
        <taxon>Heunggongvirae</taxon>
        <taxon>Uroviricota</taxon>
        <taxon>Caudoviricetes</taxon>
        <taxon>Demerecviridae</taxon>
        <taxon>Markadamsvirinae</taxon>
        <taxon>Tequintavirus</taxon>
        <taxon>Tequintavirus T5</taxon>
    </lineage>
</organism>
<feature type="chain" id="PRO_0000435550" description="H-N-H endonuclease F-TflII">
    <location>
        <begin position="1"/>
        <end position="193"/>
    </location>
</feature>
<keyword id="KW-0238">DNA-binding</keyword>
<keyword id="KW-0244">Early protein</keyword>
<keyword id="KW-0255">Endonuclease</keyword>
<keyword id="KW-0378">Hydrolase</keyword>
<keyword id="KW-0540">Nuclease</keyword>
<keyword id="KW-1185">Reference proteome</keyword>
<organismHost>
    <name type="scientific">Escherichia coli</name>
    <dbReference type="NCBI Taxonomy" id="562"/>
</organismHost>
<proteinExistence type="evidence at transcript level"/>
<reference key="1">
    <citation type="journal article" date="1982" name="Biochim. Biophys. Acta">
        <title>Cloning of genes for bacteriophage T5 stable RNAs.</title>
        <authorList>
            <person name="Ksenzenko V.N."/>
            <person name="Kamynina T.P."/>
            <person name="Kazantsev S.I."/>
            <person name="Shlyapnikov M.G."/>
            <person name="Kryukov V.M."/>
            <person name="Bayev A.A."/>
        </authorList>
    </citation>
    <scope>NUCLEOTIDE SEQUENCE [GENOMIC DNA]</scope>
</reference>
<reference key="2">
    <citation type="journal article" date="1987" name="Nucleic Acids Res.">
        <title>Nucleotide sequence of the bacteriophage T5 DNA fragment containing a distal part of tRNA gene region.</title>
        <authorList>
            <person name="Ksenzenko V.N."/>
            <person name="Shlyapnikov M.G."/>
            <person name="Azbarov V.G."/>
            <person name="Garcia O."/>
            <person name="Kryukov V.M."/>
            <person name="Bayev A.A."/>
        </authorList>
    </citation>
    <scope>NUCLEOTIDE SEQUENCE [GENOMIC DNA]</scope>
</reference>
<reference key="3">
    <citation type="journal article" date="1994" name="Mol. Biol. (Mosk.)">
        <title>Features of the structure of transfer RNA coded by bacteriophage T5.</title>
        <authorList>
            <person name="Shliapnikov M.G."/>
            <person name="Ksenzenko V.N."/>
        </authorList>
    </citation>
    <scope>NUCLEOTIDE SEQUENCE [GENOMIC DNA]</scope>
</reference>
<reference key="4">
    <citation type="submission" date="2004-01" db="EMBL/GenBank/DDBJ databases">
        <title>Bacteriophage T5 complete genome.</title>
        <authorList>
            <person name="Ksenzenko V.N."/>
            <person name="Kaliman A.V."/>
            <person name="Krutilina A.I."/>
            <person name="Shlyapnikov M.G."/>
        </authorList>
    </citation>
    <scope>NUCLEOTIDE SEQUENCE [LARGE SCALE GENOMIC DNA]</scope>
</reference>
<reference key="5">
    <citation type="journal article" date="2005" name="Virology">
        <title>Complete genome sequence of bacteriophage T5.</title>
        <authorList>
            <person name="Wang J."/>
            <person name="Jiang Y."/>
            <person name="Vincent M."/>
            <person name="Sun Y."/>
            <person name="Yu H."/>
            <person name="Wang J."/>
            <person name="Bao Q."/>
            <person name="Kong H."/>
            <person name="Hu S."/>
        </authorList>
    </citation>
    <scope>NUCLEOTIDE SEQUENCE [LARGE SCALE GENOMIC DNA]</scope>
    <scope>INDUCTION</scope>
    <source>
        <strain>ATCC 11303-B5</strain>
    </source>
</reference>
<reference key="6">
    <citation type="journal article" date="2014" name="J. Virol.">
        <title>Insights into bacteriophage T5 structure from analysis of its morphogenesis genes and protein components.</title>
        <authorList>
            <person name="Zivanovic Y."/>
            <person name="Confalonieri F."/>
            <person name="Ponchon L."/>
            <person name="Lurz R."/>
            <person name="Chami M."/>
            <person name="Flayhan A."/>
            <person name="Renouard M."/>
            <person name="Huet A."/>
            <person name="Decottignies P."/>
            <person name="Davidson A.R."/>
            <person name="Breyton C."/>
            <person name="Boulanger P."/>
        </authorList>
    </citation>
    <scope>NUCLEOTIDE SEQUENCE [LARGE SCALE GENOMIC DNA]</scope>
    <source>
        <strain>St0 deletion mutant</strain>
    </source>
</reference>
<reference key="7">
    <citation type="journal article" date="2004" name="Mol. Biol. (Mosk.)">
        <title>Novel site-specific endonucleases F-TflI, F-TflII and F-TflIV encoded by the bacteriophage T5.</title>
        <authorList>
            <person name="Akulenko N.V."/>
            <person name="Ivashina T.V."/>
            <person name="Shaloiko L.A."/>
            <person name="Shliapnikov M.G."/>
            <person name="Ksenzenko V.N."/>
        </authorList>
    </citation>
    <scope>FUNCTION</scope>
</reference>
<sequence>MKLENFKVIPEYPEYLISPYGEVYSTKSNKLLTHHLGSAGYPFVTFYEQGKNVSIVLHRLLARVFKDLPSLESELEVDHKDRNKLNFSLDNLVVMTKQDHRIKTTVERGHTIGGNKCPYCNKQINSSSKTCFDCKPKSSPDITAEQIEYWVINYSWVKASKELGLSDNGLRKRYKSLTGKDPKSIKKKVSQVG</sequence>
<accession>Q6QGM6</accession>
<name>TFLII_BPT5</name>